<proteinExistence type="evidence at transcript level"/>
<keyword id="KW-0067">ATP-binding</keyword>
<keyword id="KW-0963">Cytoplasm</keyword>
<keyword id="KW-0217">Developmental protein</keyword>
<keyword id="KW-0221">Differentiation</keyword>
<keyword id="KW-0347">Helicase</keyword>
<keyword id="KW-0378">Hydrolase</keyword>
<keyword id="KW-0469">Meiosis</keyword>
<keyword id="KW-0547">Nucleotide-binding</keyword>
<keyword id="KW-0896">Oogenesis</keyword>
<keyword id="KW-0677">Repeat</keyword>
<keyword id="KW-0943">RNA-mediated gene silencing</keyword>
<keyword id="KW-0744">Spermatogenesis</keyword>
<reference evidence="6" key="1">
    <citation type="submission" date="2004-09" db="EMBL/GenBank/DDBJ databases">
        <title>Characterization of vasa-like genes in the hybridogenetic Rana esculenta complex.</title>
        <authorList>
            <person name="Marracci S."/>
            <person name="Casola C."/>
            <person name="Ragghianti M."/>
            <person name="Bucci S."/>
            <person name="Ogielska M."/>
            <person name="Mancino G."/>
        </authorList>
    </citation>
    <scope>NUCLEOTIDE SEQUENCE [MRNA]</scope>
    <source>
        <tissue evidence="6">Testis</tissue>
    </source>
</reference>
<name>DDX4_PELLE</name>
<sequence length="724" mass="79780">MSGQEDWESEIDNPPACVPNLSNSEPAFKASNQNYFSSNNAFNRTTERGFGNRKASDDCNQNFEFSERGFGKQRAGSDANQNFESSERGFGNRRGKGRGGFGTFGKDSNGKQESGDFTNDDNRTIDDNRRRGGFQRRGGFNDETSGRGRRGVRGGTSFSGFGREDGNEQSGFTSNDGFNNETSGFGSGRRGSRGDSSFSGDRESDRGRGFGRGGFRGRNEDIGVESGKGQEGFERSEQGPRVTYIPPPPPAEESDIFKHYQTGINFDKYDDIVVEVSGSDVPPAILTFEEANLCDSLAKNVCKSGYVKLTPIQKHSIPIIVAGRDLMACAQTGSGKTAAFLLPILAHLMVKGVESSAFQTLKEPEAIIVAPTRELINQIYLDARKFSYGTCVRPVVIYGGTQMFHSLKQISEGCNILCATPGRLLDVIRKEKIGLTKLRYLVLDEADRMLDMGFREDIENLLKSSGMPSKEERQTLMFSATFPSSIQSLAREILKPDYLFVVVGQVGGACSDVEQMVIEVDEFGKKDKLMEILQEIGSERTMVFVKTKKKADFIATFLCQEKVPSTSIHGDREQKERETALRDFRTGQCPVIVATSVAARGLDIENVSYVINFDIPDDIDEYVHRIGRTGRCGNTGRAISFFDKRGDDEQRIARSLVKVLSDAHQEVPAWLEEVAFSAHGSSAYNPRSNKFASTDDRKRGDSRGDYSTSGFSPSAAQAEEEDWG</sequence>
<organism>
    <name type="scientific">Pelophylax lessonae</name>
    <name type="common">Pool frog</name>
    <name type="synonym">Rana lessonae</name>
    <dbReference type="NCBI Taxonomy" id="45623"/>
    <lineage>
        <taxon>Eukaryota</taxon>
        <taxon>Metazoa</taxon>
        <taxon>Chordata</taxon>
        <taxon>Craniata</taxon>
        <taxon>Vertebrata</taxon>
        <taxon>Euteleostomi</taxon>
        <taxon>Amphibia</taxon>
        <taxon>Batrachia</taxon>
        <taxon>Anura</taxon>
        <taxon>Neobatrachia</taxon>
        <taxon>Ranoidea</taxon>
        <taxon>Ranidae</taxon>
        <taxon>Pelophylax</taxon>
    </lineage>
</organism>
<accession>Q3MSQ8</accession>
<feature type="chain" id="PRO_0000248852" description="Probable ATP-dependent RNA helicase DDX4">
    <location>
        <begin position="1"/>
        <end position="724"/>
    </location>
</feature>
<feature type="domain" description="Helicase ATP-binding" evidence="3">
    <location>
        <begin position="317"/>
        <end position="500"/>
    </location>
</feature>
<feature type="domain" description="Helicase C-terminal" evidence="4">
    <location>
        <begin position="512"/>
        <end position="675"/>
    </location>
</feature>
<feature type="region of interest" description="Disordered" evidence="5">
    <location>
        <begin position="1"/>
        <end position="25"/>
    </location>
</feature>
<feature type="region of interest" description="Disordered" evidence="5">
    <location>
        <begin position="37"/>
        <end position="241"/>
    </location>
</feature>
<feature type="region of interest" description="Disordered" evidence="5">
    <location>
        <begin position="683"/>
        <end position="724"/>
    </location>
</feature>
<feature type="short sequence motif" description="Q motif">
    <location>
        <begin position="286"/>
        <end position="314"/>
    </location>
</feature>
<feature type="short sequence motif" description="DEAD box" evidence="1">
    <location>
        <begin position="444"/>
        <end position="447"/>
    </location>
</feature>
<feature type="compositionally biased region" description="Acidic residues" evidence="5">
    <location>
        <begin position="1"/>
        <end position="11"/>
    </location>
</feature>
<feature type="compositionally biased region" description="Basic and acidic residues" evidence="5">
    <location>
        <begin position="108"/>
        <end position="130"/>
    </location>
</feature>
<feature type="compositionally biased region" description="Polar residues" evidence="5">
    <location>
        <begin position="168"/>
        <end position="182"/>
    </location>
</feature>
<feature type="compositionally biased region" description="Polar residues" evidence="5">
    <location>
        <begin position="683"/>
        <end position="692"/>
    </location>
</feature>
<feature type="compositionally biased region" description="Basic and acidic residues" evidence="5">
    <location>
        <begin position="693"/>
        <end position="704"/>
    </location>
</feature>
<feature type="compositionally biased region" description="Polar residues" evidence="5">
    <location>
        <begin position="705"/>
        <end position="715"/>
    </location>
</feature>
<feature type="binding site" evidence="3">
    <location>
        <begin position="330"/>
        <end position="337"/>
    </location>
    <ligand>
        <name>ATP</name>
        <dbReference type="ChEBI" id="CHEBI:30616"/>
    </ligand>
</feature>
<dbReference type="EC" id="3.6.4.13" evidence="1"/>
<dbReference type="EMBL" id="AJ841700">
    <property type="protein sequence ID" value="CAH56439.1"/>
    <property type="molecule type" value="mRNA"/>
</dbReference>
<dbReference type="SMR" id="Q3MSQ8"/>
<dbReference type="GO" id="GO:0071546">
    <property type="term" value="C:pi-body"/>
    <property type="evidence" value="ECO:0000250"/>
    <property type="project" value="UniProtKB"/>
</dbReference>
<dbReference type="GO" id="GO:0071547">
    <property type="term" value="C:piP-body"/>
    <property type="evidence" value="ECO:0000250"/>
    <property type="project" value="UniProtKB"/>
</dbReference>
<dbReference type="GO" id="GO:0005524">
    <property type="term" value="F:ATP binding"/>
    <property type="evidence" value="ECO:0007669"/>
    <property type="project" value="UniProtKB-KW"/>
</dbReference>
<dbReference type="GO" id="GO:0016887">
    <property type="term" value="F:ATP hydrolysis activity"/>
    <property type="evidence" value="ECO:0000250"/>
    <property type="project" value="UniProtKB"/>
</dbReference>
<dbReference type="GO" id="GO:0003676">
    <property type="term" value="F:nucleic acid binding"/>
    <property type="evidence" value="ECO:0007669"/>
    <property type="project" value="InterPro"/>
</dbReference>
<dbReference type="GO" id="GO:0003724">
    <property type="term" value="F:RNA helicase activity"/>
    <property type="evidence" value="ECO:0007669"/>
    <property type="project" value="UniProtKB-EC"/>
</dbReference>
<dbReference type="GO" id="GO:0007141">
    <property type="term" value="P:male meiosis I"/>
    <property type="evidence" value="ECO:0000250"/>
    <property type="project" value="UniProtKB"/>
</dbReference>
<dbReference type="GO" id="GO:0007140">
    <property type="term" value="P:male meiotic nuclear division"/>
    <property type="evidence" value="ECO:0000250"/>
    <property type="project" value="UniProtKB"/>
</dbReference>
<dbReference type="GO" id="GO:0048477">
    <property type="term" value="P:oogenesis"/>
    <property type="evidence" value="ECO:0007669"/>
    <property type="project" value="UniProtKB-KW"/>
</dbReference>
<dbReference type="GO" id="GO:0034587">
    <property type="term" value="P:piRNA processing"/>
    <property type="evidence" value="ECO:0000250"/>
    <property type="project" value="UniProtKB"/>
</dbReference>
<dbReference type="GO" id="GO:0007283">
    <property type="term" value="P:spermatogenesis"/>
    <property type="evidence" value="ECO:0000250"/>
    <property type="project" value="UniProtKB"/>
</dbReference>
<dbReference type="GO" id="GO:0141196">
    <property type="term" value="P:transposable element silencing by piRNA-mediated DNA methylation"/>
    <property type="evidence" value="ECO:0000250"/>
    <property type="project" value="UniProtKB"/>
</dbReference>
<dbReference type="GO" id="GO:0141006">
    <property type="term" value="P:transposable element silencing by piRNA-mediated heterochromatin formation"/>
    <property type="evidence" value="ECO:0000250"/>
    <property type="project" value="UniProtKB"/>
</dbReference>
<dbReference type="CDD" id="cd18052">
    <property type="entry name" value="DEADc_DDX4"/>
    <property type="match status" value="1"/>
</dbReference>
<dbReference type="CDD" id="cd18787">
    <property type="entry name" value="SF2_C_DEAD"/>
    <property type="match status" value="1"/>
</dbReference>
<dbReference type="FunFam" id="3.40.50.300:FF:000008">
    <property type="entry name" value="ATP-dependent RNA helicase RhlB"/>
    <property type="match status" value="1"/>
</dbReference>
<dbReference type="FunFam" id="3.40.50.300:FF:000397">
    <property type="entry name" value="Probable ATP-dependent RNA helicase DDX4"/>
    <property type="match status" value="1"/>
</dbReference>
<dbReference type="Gene3D" id="3.40.50.300">
    <property type="entry name" value="P-loop containing nucleotide triphosphate hydrolases"/>
    <property type="match status" value="2"/>
</dbReference>
<dbReference type="InterPro" id="IPR011545">
    <property type="entry name" value="DEAD/DEAH_box_helicase_dom"/>
</dbReference>
<dbReference type="InterPro" id="IPR014001">
    <property type="entry name" value="Helicase_ATP-bd"/>
</dbReference>
<dbReference type="InterPro" id="IPR001650">
    <property type="entry name" value="Helicase_C-like"/>
</dbReference>
<dbReference type="InterPro" id="IPR027417">
    <property type="entry name" value="P-loop_NTPase"/>
</dbReference>
<dbReference type="InterPro" id="IPR000629">
    <property type="entry name" value="RNA-helicase_DEAD-box_CS"/>
</dbReference>
<dbReference type="InterPro" id="IPR014014">
    <property type="entry name" value="RNA_helicase_DEAD_Q_motif"/>
</dbReference>
<dbReference type="PANTHER" id="PTHR47958">
    <property type="entry name" value="ATP-DEPENDENT RNA HELICASE DBP3"/>
    <property type="match status" value="1"/>
</dbReference>
<dbReference type="Pfam" id="PF00270">
    <property type="entry name" value="DEAD"/>
    <property type="match status" value="1"/>
</dbReference>
<dbReference type="Pfam" id="PF00271">
    <property type="entry name" value="Helicase_C"/>
    <property type="match status" value="1"/>
</dbReference>
<dbReference type="SMART" id="SM00487">
    <property type="entry name" value="DEXDc"/>
    <property type="match status" value="1"/>
</dbReference>
<dbReference type="SMART" id="SM00490">
    <property type="entry name" value="HELICc"/>
    <property type="match status" value="1"/>
</dbReference>
<dbReference type="SUPFAM" id="SSF52540">
    <property type="entry name" value="P-loop containing nucleoside triphosphate hydrolases"/>
    <property type="match status" value="1"/>
</dbReference>
<dbReference type="PROSITE" id="PS00039">
    <property type="entry name" value="DEAD_ATP_HELICASE"/>
    <property type="match status" value="1"/>
</dbReference>
<dbReference type="PROSITE" id="PS51192">
    <property type="entry name" value="HELICASE_ATP_BIND_1"/>
    <property type="match status" value="1"/>
</dbReference>
<dbReference type="PROSITE" id="PS51194">
    <property type="entry name" value="HELICASE_CTER"/>
    <property type="match status" value="1"/>
</dbReference>
<dbReference type="PROSITE" id="PS51195">
    <property type="entry name" value="Q_MOTIF"/>
    <property type="match status" value="1"/>
</dbReference>
<comment type="function">
    <text evidence="1">Probable ATP-dependent RNA helicase required during spermatogenesis to repress transposable elements and preventing their mobilization, which is essential for the germline integrity. Acts via the piRNA metabolic process, which mediates the repression of transposable elements during meiosis by forming complexes composed of piRNAs and Piwi proteins and governs the methylation and subsequent repression of transposons. Involved in the secondary piRNAs metabolic process, the production of piRNAs in fetal male germ cells through a ping-pong amplification cycle.</text>
</comment>
<comment type="catalytic activity">
    <reaction evidence="1">
        <text>ATP + H2O = ADP + phosphate + H(+)</text>
        <dbReference type="Rhea" id="RHEA:13065"/>
        <dbReference type="ChEBI" id="CHEBI:15377"/>
        <dbReference type="ChEBI" id="CHEBI:15378"/>
        <dbReference type="ChEBI" id="CHEBI:30616"/>
        <dbReference type="ChEBI" id="CHEBI:43474"/>
        <dbReference type="ChEBI" id="CHEBI:456216"/>
        <dbReference type="EC" id="3.6.4.13"/>
    </reaction>
</comment>
<comment type="subcellular location">
    <subcellularLocation>
        <location evidence="1">Cytoplasm</location>
    </subcellularLocation>
    <text evidence="1">Component of the meiotic nuage, also named P granule, a germ-cell-specific organelle required to repress transposon activity during meiosis.</text>
</comment>
<comment type="similarity">
    <text evidence="2">Belongs to the DEAD box helicase family. DDX4/VASA subfamily.</text>
</comment>
<gene>
    <name evidence="2" type="primary">ddx4</name>
    <name evidence="6" type="synonym">vlg</name>
</gene>
<protein>
    <recommendedName>
        <fullName>Probable ATP-dependent RNA helicase DDX4</fullName>
        <ecNumber evidence="1">3.6.4.13</ecNumber>
    </recommendedName>
    <alternativeName>
        <fullName>DEAD box protein 4</fullName>
    </alternativeName>
    <alternativeName>
        <fullName>Vasa homolog</fullName>
    </alternativeName>
</protein>
<evidence type="ECO:0000250" key="1">
    <source>
        <dbReference type="UniProtKB" id="Q61496"/>
    </source>
</evidence>
<evidence type="ECO:0000250" key="2">
    <source>
        <dbReference type="UniProtKB" id="Q64060"/>
    </source>
</evidence>
<evidence type="ECO:0000255" key="3">
    <source>
        <dbReference type="PROSITE-ProRule" id="PRU00541"/>
    </source>
</evidence>
<evidence type="ECO:0000255" key="4">
    <source>
        <dbReference type="PROSITE-ProRule" id="PRU00542"/>
    </source>
</evidence>
<evidence type="ECO:0000256" key="5">
    <source>
        <dbReference type="SAM" id="MobiDB-lite"/>
    </source>
</evidence>
<evidence type="ECO:0000312" key="6">
    <source>
        <dbReference type="EMBL" id="CAH56439.1"/>
    </source>
</evidence>